<keyword id="KW-0150">Chloroplast</keyword>
<keyword id="KW-0472">Membrane</keyword>
<keyword id="KW-0520">NAD</keyword>
<keyword id="KW-0521">NADP</keyword>
<keyword id="KW-0934">Plastid</keyword>
<keyword id="KW-1001">Plastid inner membrane</keyword>
<keyword id="KW-0653">Protein transport</keyword>
<keyword id="KW-1185">Reference proteome</keyword>
<keyword id="KW-0677">Repeat</keyword>
<keyword id="KW-0793">Thylakoid</keyword>
<keyword id="KW-0809">Transit peptide</keyword>
<keyword id="KW-0813">Transport</keyword>
<organism>
    <name type="scientific">Oryza sativa subsp. japonica</name>
    <name type="common">Rice</name>
    <dbReference type="NCBI Taxonomy" id="39947"/>
    <lineage>
        <taxon>Eukaryota</taxon>
        <taxon>Viridiplantae</taxon>
        <taxon>Streptophyta</taxon>
        <taxon>Embryophyta</taxon>
        <taxon>Tracheophyta</taxon>
        <taxon>Spermatophyta</taxon>
        <taxon>Magnoliopsida</taxon>
        <taxon>Liliopsida</taxon>
        <taxon>Poales</taxon>
        <taxon>Poaceae</taxon>
        <taxon>BOP clade</taxon>
        <taxon>Oryzoideae</taxon>
        <taxon>Oryzeae</taxon>
        <taxon>Oryzinae</taxon>
        <taxon>Oryza</taxon>
        <taxon>Oryza sativa</taxon>
    </lineage>
</organism>
<accession>Q10A77</accession>
<dbReference type="EMBL" id="DP000086">
    <property type="protein sequence ID" value="ABG65881.1"/>
    <property type="molecule type" value="Genomic_DNA"/>
</dbReference>
<dbReference type="EMBL" id="AP008216">
    <property type="protein sequence ID" value="BAF25922.1"/>
    <property type="molecule type" value="Genomic_DNA"/>
</dbReference>
<dbReference type="EMBL" id="AP014966">
    <property type="protein sequence ID" value="BAT09555.1"/>
    <property type="molecule type" value="Genomic_DNA"/>
</dbReference>
<dbReference type="EMBL" id="AK065110">
    <property type="protein sequence ID" value="BAG89364.1"/>
    <property type="molecule type" value="mRNA"/>
</dbReference>
<dbReference type="SMR" id="Q10A77"/>
<dbReference type="FunCoup" id="Q10A77">
    <property type="interactions" value="780"/>
</dbReference>
<dbReference type="STRING" id="39947.Q10A77"/>
<dbReference type="PaxDb" id="39947-Q10A77"/>
<dbReference type="EnsemblPlants" id="Os10t0100300-01">
    <property type="protein sequence ID" value="Os10t0100300-01"/>
    <property type="gene ID" value="Os10g0100300"/>
</dbReference>
<dbReference type="Gramene" id="Os10t0100300-01">
    <property type="protein sequence ID" value="Os10t0100300-01"/>
    <property type="gene ID" value="Os10g0100300"/>
</dbReference>
<dbReference type="KEGG" id="dosa:Os10g0100300"/>
<dbReference type="KEGG" id="osa:4347935"/>
<dbReference type="eggNOG" id="KOG1203">
    <property type="taxonomic scope" value="Eukaryota"/>
</dbReference>
<dbReference type="HOGENOM" id="CLU_025711_7_1_1"/>
<dbReference type="InParanoid" id="Q10A77"/>
<dbReference type="OMA" id="RYPHARK"/>
<dbReference type="OrthoDB" id="419598at2759"/>
<dbReference type="Proteomes" id="UP000000763">
    <property type="component" value="Chromosome 10"/>
</dbReference>
<dbReference type="Proteomes" id="UP000059680">
    <property type="component" value="Chromosome 10"/>
</dbReference>
<dbReference type="GO" id="GO:0009706">
    <property type="term" value="C:chloroplast inner membrane"/>
    <property type="evidence" value="ECO:0007669"/>
    <property type="project" value="UniProtKB-SubCell"/>
</dbReference>
<dbReference type="GO" id="GO:0009570">
    <property type="term" value="C:chloroplast stroma"/>
    <property type="evidence" value="ECO:0007669"/>
    <property type="project" value="UniProtKB-SubCell"/>
</dbReference>
<dbReference type="GO" id="GO:0098807">
    <property type="term" value="C:chloroplast thylakoid membrane protein complex"/>
    <property type="evidence" value="ECO:0000314"/>
    <property type="project" value="UniProtKB"/>
</dbReference>
<dbReference type="GO" id="GO:0015031">
    <property type="term" value="P:protein transport"/>
    <property type="evidence" value="ECO:0007669"/>
    <property type="project" value="UniProtKB-KW"/>
</dbReference>
<dbReference type="CDD" id="cd05243">
    <property type="entry name" value="SDR_a5"/>
    <property type="match status" value="1"/>
</dbReference>
<dbReference type="FunFam" id="3.40.50.720:FF:000499">
    <property type="entry name" value="Protein TIC 62, chloroplastic"/>
    <property type="match status" value="1"/>
</dbReference>
<dbReference type="Gene3D" id="3.40.50.720">
    <property type="entry name" value="NAD(P)-binding Rossmann-like Domain"/>
    <property type="match status" value="1"/>
</dbReference>
<dbReference type="InterPro" id="IPR016040">
    <property type="entry name" value="NAD(P)-bd_dom"/>
</dbReference>
<dbReference type="InterPro" id="IPR036291">
    <property type="entry name" value="NAD(P)-bd_dom_sf"/>
</dbReference>
<dbReference type="InterPro" id="IPR044719">
    <property type="entry name" value="TIC62"/>
</dbReference>
<dbReference type="PANTHER" id="PTHR47285">
    <property type="entry name" value="PROTEIN TIC 62, CHLOROPLASTIC"/>
    <property type="match status" value="1"/>
</dbReference>
<dbReference type="PANTHER" id="PTHR47285:SF1">
    <property type="entry name" value="PROTEIN TIC 62, CHLOROPLASTIC"/>
    <property type="match status" value="1"/>
</dbReference>
<dbReference type="Pfam" id="PF13460">
    <property type="entry name" value="NAD_binding_10"/>
    <property type="match status" value="1"/>
</dbReference>
<dbReference type="SUPFAM" id="SSF51735">
    <property type="entry name" value="NAD(P)-binding Rossmann-fold domains"/>
    <property type="match status" value="1"/>
</dbReference>
<feature type="transit peptide" description="Chloroplast" evidence="2">
    <location>
        <begin position="1"/>
        <end position="55"/>
    </location>
</feature>
<feature type="chain" id="PRO_0000442381" description="Protein TIC 62, chloroplastic" evidence="2">
    <location>
        <begin position="56"/>
        <end position="497"/>
    </location>
</feature>
<feature type="repeat" description="1" evidence="1">
    <location>
        <begin position="346"/>
        <end position="367"/>
    </location>
</feature>
<feature type="repeat" description="2" evidence="1">
    <location>
        <begin position="408"/>
        <end position="429"/>
    </location>
</feature>
<feature type="repeat" description="3" evidence="1">
    <location>
        <begin position="474"/>
        <end position="495"/>
    </location>
</feature>
<feature type="region of interest" description="Disordered" evidence="3">
    <location>
        <begin position="310"/>
        <end position="497"/>
    </location>
</feature>
<feature type="region of interest" description="3 X 22 AA approximate repeats" evidence="1">
    <location>
        <begin position="346"/>
        <end position="495"/>
    </location>
</feature>
<feature type="compositionally biased region" description="Pro residues" evidence="3">
    <location>
        <begin position="359"/>
        <end position="369"/>
    </location>
</feature>
<feature type="compositionally biased region" description="Low complexity" evidence="3">
    <location>
        <begin position="370"/>
        <end position="387"/>
    </location>
</feature>
<feature type="compositionally biased region" description="Polar residues" evidence="3">
    <location>
        <begin position="388"/>
        <end position="408"/>
    </location>
</feature>
<feature type="compositionally biased region" description="Low complexity" evidence="3">
    <location>
        <begin position="430"/>
        <end position="458"/>
    </location>
</feature>
<feature type="compositionally biased region" description="Polar residues" evidence="3">
    <location>
        <begin position="459"/>
        <end position="476"/>
    </location>
</feature>
<feature type="compositionally biased region" description="Pro residues" evidence="3">
    <location>
        <begin position="487"/>
        <end position="497"/>
    </location>
</feature>
<feature type="binding site" evidence="2">
    <location>
        <begin position="75"/>
        <end position="104"/>
    </location>
    <ligand>
        <name>NADP(+)</name>
        <dbReference type="ChEBI" id="CHEBI:58349"/>
    </ligand>
</feature>
<gene>
    <name type="primary">TIC62</name>
    <name evidence="5" type="ordered locus">LOC_Os10g01044</name>
    <name evidence="6" type="ordered locus">Os10g0100300</name>
    <name evidence="7" type="ORF">OSNPB_100100300</name>
</gene>
<evidence type="ECO:0000250" key="1">
    <source>
        <dbReference type="UniProtKB" id="Q8H0U5"/>
    </source>
</evidence>
<evidence type="ECO:0000255" key="2"/>
<evidence type="ECO:0000256" key="3">
    <source>
        <dbReference type="SAM" id="MobiDB-lite"/>
    </source>
</evidence>
<evidence type="ECO:0000269" key="4">
    <source>
    </source>
</evidence>
<evidence type="ECO:0000312" key="5">
    <source>
        <dbReference type="EMBL" id="ABG65881.1"/>
    </source>
</evidence>
<evidence type="ECO:0000312" key="6">
    <source>
        <dbReference type="EMBL" id="BAF25922.1"/>
    </source>
</evidence>
<evidence type="ECO:0000312" key="7">
    <source>
        <dbReference type="EMBL" id="BAT09555.1"/>
    </source>
</evidence>
<protein>
    <recommendedName>
        <fullName>Protein TIC 62, chloroplastic</fullName>
    </recommendedName>
    <alternativeName>
        <fullName>Translocon at the inner envelope membrane of chloroplasts 62</fullName>
        <shortName>OsTIC62</shortName>
    </alternativeName>
</protein>
<sequence>MEQAAKATISLSPPSYAGCCMAACPYRSTRHLRRGGGCSARSISSLRHAPSARVYAAAAAAATPESKSTKENDLVFIAGATGKVGSRAVREFIKLGFRVRAGVRSAQRASSLVQSVEQLKVDDDATSPAERLEIVECDLEKQAQSDIVSAIGNAAIVVCSIGASEKDILDVTGPYRIDYMATNNLVQAATAAKVEHFILVTSLGTNRIGFPAFLLNLFWGVLCWKRRAEEALIGSGLPYTIVRPGGMERPTDAFKETHNLVVAVEDTYVGGLVSNLQVAELIACIASNRRTAYCKVVEAIAETTAPLLPTEDQLANIPSKRQPPPEPEVVQQGETPPKPIQQSQRPLSPYTAFVDLKPPSSPSPCPPSAAAPAPTSTDTAAAGSSSTLNSSATGTPISVDQPKQQQRPLSPYTRYEELKPPSSPSPTPPSAASSASVSASPDTPPAAAASSAALDSSANGTPITGDQLNQQQSPLSPYTRYEELKPPSSPTPSTPKL</sequence>
<name>TIC62_ORYSJ</name>
<comment type="function">
    <text evidence="1">Involved in protein precursor import into chloroplasts. Part of the redox regulon consisting of TIC32, TIC 55 and TIC62. Acts as a membrane anchor of LFNR1 and LFNR2. Has a NADPH-dependent dehydrogenase activity, but only after preincubation with lipids.</text>
</comment>
<comment type="subunit">
    <text evidence="1 4">Part of the Tic complex. Interacts with TIC110 and TIC55 (By similarity). Interacts with LFNR1 and LFNR2. Component of high molecular weight thylakoid LFNRs-containing protein complexes containing LIR1, LFNR1, LFNR2, TIC62 and TROL proteins (PubMed:26941088).</text>
</comment>
<comment type="subcellular location">
    <subcellularLocation>
        <location evidence="1">Plastid</location>
        <location evidence="1">Chloroplast inner membrane</location>
        <topology evidence="1">Peripheral membrane protein</topology>
    </subcellularLocation>
    <subcellularLocation>
        <location evidence="1">Plastid</location>
        <location evidence="1">Chloroplast stroma</location>
    </subcellularLocation>
    <subcellularLocation>
        <location evidence="1">Plastid</location>
        <location evidence="1">Chloroplast thylakoid</location>
    </subcellularLocation>
    <text evidence="1">Shuttles between the membranes and the stroma, depending on the redox state of the plastidic NADP(+)/NADPH pool.</text>
</comment>
<proteinExistence type="evidence at protein level"/>
<reference key="1">
    <citation type="journal article" date="2003" name="Science">
        <title>In-depth view of structure, activity, and evolution of rice chromosome 10.</title>
        <authorList>
            <person name="Yu Y."/>
            <person name="Rambo T."/>
            <person name="Currie J."/>
            <person name="Saski C."/>
            <person name="Kim H.-R."/>
            <person name="Collura K."/>
            <person name="Thompson S."/>
            <person name="Simmons J."/>
            <person name="Yang T.-J."/>
            <person name="Nah G."/>
            <person name="Patel A.J."/>
            <person name="Thurmond S."/>
            <person name="Henry D."/>
            <person name="Oates R."/>
            <person name="Palmer M."/>
            <person name="Pries G."/>
            <person name="Gibson J."/>
            <person name="Anderson H."/>
            <person name="Paradkar M."/>
            <person name="Crane L."/>
            <person name="Dale J."/>
            <person name="Carver M.B."/>
            <person name="Wood T."/>
            <person name="Frisch D."/>
            <person name="Engler F."/>
            <person name="Soderlund C."/>
            <person name="Palmer L.E."/>
            <person name="Teytelman L."/>
            <person name="Nascimento L."/>
            <person name="De la Bastide M."/>
            <person name="Spiegel L."/>
            <person name="Ware D."/>
            <person name="O'Shaughnessy A."/>
            <person name="Dike S."/>
            <person name="Dedhia N."/>
            <person name="Preston R."/>
            <person name="Huang E."/>
            <person name="Ferraro K."/>
            <person name="Kuit K."/>
            <person name="Miller B."/>
            <person name="Zutavern T."/>
            <person name="Katzenberger F."/>
            <person name="Muller S."/>
            <person name="Balija V."/>
            <person name="Martienssen R.A."/>
            <person name="Stein L."/>
            <person name="Minx P."/>
            <person name="Johnson D."/>
            <person name="Cordum H."/>
            <person name="Mardis E."/>
            <person name="Cheng Z."/>
            <person name="Jiang J."/>
            <person name="Wilson R."/>
            <person name="McCombie W.R."/>
            <person name="Wing R.A."/>
            <person name="Yuan Q."/>
            <person name="Ouyang S."/>
            <person name="Liu J."/>
            <person name="Jones K.M."/>
            <person name="Gansberger K."/>
            <person name="Moffat K."/>
            <person name="Hill J."/>
            <person name="Tsitrin T."/>
            <person name="Overton L."/>
            <person name="Bera J."/>
            <person name="Kim M."/>
            <person name="Jin S."/>
            <person name="Tallon L."/>
            <person name="Ciecko A."/>
            <person name="Pai G."/>
            <person name="Van Aken S."/>
            <person name="Utterback T."/>
            <person name="Reidmuller S."/>
            <person name="Bormann J."/>
            <person name="Feldblyum T."/>
            <person name="Hsiao J."/>
            <person name="Zismann V."/>
            <person name="Blunt S."/>
            <person name="de Vazeille A.R."/>
            <person name="Shaffer T."/>
            <person name="Koo H."/>
            <person name="Suh B."/>
            <person name="Yang Q."/>
            <person name="Haas B."/>
            <person name="Peterson J."/>
            <person name="Pertea M."/>
            <person name="Volfovsky N."/>
            <person name="Wortman J."/>
            <person name="White O."/>
            <person name="Salzberg S.L."/>
            <person name="Fraser C.M."/>
            <person name="Buell C.R."/>
            <person name="Messing J."/>
            <person name="Song R."/>
            <person name="Fuks G."/>
            <person name="Llaca V."/>
            <person name="Kovchak S."/>
            <person name="Young S."/>
            <person name="Bowers J.E."/>
            <person name="Paterson A.H."/>
            <person name="Johns M.A."/>
            <person name="Mao L."/>
            <person name="Pan H."/>
            <person name="Dean R.A."/>
        </authorList>
    </citation>
    <scope>NUCLEOTIDE SEQUENCE [LARGE SCALE GENOMIC DNA]</scope>
    <source>
        <strain>cv. Nipponbare</strain>
    </source>
</reference>
<reference key="2">
    <citation type="journal article" date="2005" name="Nature">
        <title>The map-based sequence of the rice genome.</title>
        <authorList>
            <consortium name="International rice genome sequencing project (IRGSP)"/>
        </authorList>
    </citation>
    <scope>NUCLEOTIDE SEQUENCE [LARGE SCALE GENOMIC DNA]</scope>
    <source>
        <strain>cv. Nipponbare</strain>
    </source>
</reference>
<reference key="3">
    <citation type="journal article" date="2008" name="Nucleic Acids Res.">
        <title>The rice annotation project database (RAP-DB): 2008 update.</title>
        <authorList>
            <consortium name="The rice annotation project (RAP)"/>
        </authorList>
    </citation>
    <scope>GENOME REANNOTATION</scope>
    <source>
        <strain>cv. Nipponbare</strain>
    </source>
</reference>
<reference key="4">
    <citation type="journal article" date="2013" name="Rice">
        <title>Improvement of the Oryza sativa Nipponbare reference genome using next generation sequence and optical map data.</title>
        <authorList>
            <person name="Kawahara Y."/>
            <person name="de la Bastide M."/>
            <person name="Hamilton J.P."/>
            <person name="Kanamori H."/>
            <person name="McCombie W.R."/>
            <person name="Ouyang S."/>
            <person name="Schwartz D.C."/>
            <person name="Tanaka T."/>
            <person name="Wu J."/>
            <person name="Zhou S."/>
            <person name="Childs K.L."/>
            <person name="Davidson R.M."/>
            <person name="Lin H."/>
            <person name="Quesada-Ocampo L."/>
            <person name="Vaillancourt B."/>
            <person name="Sakai H."/>
            <person name="Lee S.S."/>
            <person name="Kim J."/>
            <person name="Numa H."/>
            <person name="Itoh T."/>
            <person name="Buell C.R."/>
            <person name="Matsumoto T."/>
        </authorList>
    </citation>
    <scope>GENOME REANNOTATION</scope>
    <source>
        <strain>cv. Nipponbare</strain>
    </source>
</reference>
<reference key="5">
    <citation type="journal article" date="2003" name="Science">
        <title>Collection, mapping, and annotation of over 28,000 cDNA clones from japonica rice.</title>
        <authorList>
            <consortium name="The rice full-length cDNA consortium"/>
        </authorList>
    </citation>
    <scope>NUCLEOTIDE SEQUENCE [LARGE SCALE MRNA]</scope>
    <source>
        <strain>cv. Nipponbare</strain>
    </source>
</reference>
<reference key="6">
    <citation type="journal article" date="2016" name="Plant Cell">
        <title>LIGHT-INDUCED RICE1 regulates light-dependent attachment of LEAF-TYPE FERREDOXIN-NADP+ OXIDOREDUCTASE to the thylakoid membrane in rice and Arabidopsis.</title>
        <authorList>
            <person name="Yang C."/>
            <person name="Hu H."/>
            <person name="Ren H."/>
            <person name="Kong Y."/>
            <person name="Lin H."/>
            <person name="Guo J."/>
            <person name="Wang L."/>
            <person name="He Y."/>
            <person name="Ding X."/>
            <person name="Grabsztunowicz M."/>
            <person name="Mulo P."/>
            <person name="Chen T."/>
            <person name="Liu Y."/>
            <person name="Wu Z."/>
            <person name="Wu Y."/>
            <person name="Mao C."/>
            <person name="Wu P."/>
            <person name="Mo X."/>
        </authorList>
    </citation>
    <scope>INTERACTION WITH LFNR1 AND LFNR2</scope>
    <source>
        <strain>cv. Nipponbare</strain>
    </source>
</reference>